<accession>A6L048</accession>
<keyword id="KW-0119">Carbohydrate metabolism</keyword>
<keyword id="KW-0963">Cytoplasm</keyword>
<keyword id="KW-0294">Fucose metabolism</keyword>
<keyword id="KW-0413">Isomerase</keyword>
<keyword id="KW-0464">Manganese</keyword>
<keyword id="KW-0479">Metal-binding</keyword>
<gene>
    <name evidence="1" type="primary">fucI</name>
    <name type="ordered locus">BVU_1373</name>
</gene>
<reference key="1">
    <citation type="journal article" date="2007" name="PLoS Biol.">
        <title>Evolution of symbiotic bacteria in the distal human intestine.</title>
        <authorList>
            <person name="Xu J."/>
            <person name="Mahowald M.A."/>
            <person name="Ley R.E."/>
            <person name="Lozupone C.A."/>
            <person name="Hamady M."/>
            <person name="Martens E.C."/>
            <person name="Henrissat B."/>
            <person name="Coutinho P.M."/>
            <person name="Minx P."/>
            <person name="Latreille P."/>
            <person name="Cordum H."/>
            <person name="Van Brunt A."/>
            <person name="Kim K."/>
            <person name="Fulton R.S."/>
            <person name="Fulton L.A."/>
            <person name="Clifton S.W."/>
            <person name="Wilson R.K."/>
            <person name="Knight R.D."/>
            <person name="Gordon J.I."/>
        </authorList>
    </citation>
    <scope>NUCLEOTIDE SEQUENCE [LARGE SCALE GENOMIC DNA]</scope>
    <source>
        <strain>ATCC 8482 / DSM 1447 / JCM 5826 / CCUG 4940 / NBRC 14291 / NCTC 11154</strain>
    </source>
</reference>
<evidence type="ECO:0000255" key="1">
    <source>
        <dbReference type="HAMAP-Rule" id="MF_01254"/>
    </source>
</evidence>
<proteinExistence type="inferred from homology"/>
<organism>
    <name type="scientific">Phocaeicola vulgatus (strain ATCC 8482 / DSM 1447 / JCM 5826 / CCUG 4940 / NBRC 14291 / NCTC 11154)</name>
    <name type="common">Bacteroides vulgatus</name>
    <dbReference type="NCBI Taxonomy" id="435590"/>
    <lineage>
        <taxon>Bacteria</taxon>
        <taxon>Pseudomonadati</taxon>
        <taxon>Bacteroidota</taxon>
        <taxon>Bacteroidia</taxon>
        <taxon>Bacteroidales</taxon>
        <taxon>Bacteroidaceae</taxon>
        <taxon>Phocaeicola</taxon>
    </lineage>
</organism>
<dbReference type="EC" id="5.3.1.25" evidence="1"/>
<dbReference type="EMBL" id="CP000139">
    <property type="protein sequence ID" value="ABR39062.1"/>
    <property type="molecule type" value="Genomic_DNA"/>
</dbReference>
<dbReference type="RefSeq" id="WP_005849650.1">
    <property type="nucleotide sequence ID" value="NZ_CAXVNH010000079.1"/>
</dbReference>
<dbReference type="SMR" id="A6L048"/>
<dbReference type="STRING" id="435590.BVU_1373"/>
<dbReference type="PaxDb" id="435590-BVU_1373"/>
<dbReference type="GeneID" id="93445246"/>
<dbReference type="KEGG" id="bvu:BVU_1373"/>
<dbReference type="eggNOG" id="COG2407">
    <property type="taxonomic scope" value="Bacteria"/>
</dbReference>
<dbReference type="HOGENOM" id="CLU_033326_1_0_10"/>
<dbReference type="BioCyc" id="BVUL435590:G1G59-1434-MONOMER"/>
<dbReference type="UniPathway" id="UPA00563">
    <property type="reaction ID" value="UER00624"/>
</dbReference>
<dbReference type="Proteomes" id="UP000002861">
    <property type="component" value="Chromosome"/>
</dbReference>
<dbReference type="GO" id="GO:0005737">
    <property type="term" value="C:cytoplasm"/>
    <property type="evidence" value="ECO:0007669"/>
    <property type="project" value="UniProtKB-SubCell"/>
</dbReference>
<dbReference type="GO" id="GO:0008790">
    <property type="term" value="F:arabinose isomerase activity"/>
    <property type="evidence" value="ECO:0007669"/>
    <property type="project" value="TreeGrafter"/>
</dbReference>
<dbReference type="GO" id="GO:0008736">
    <property type="term" value="F:L-fucose isomerase activity"/>
    <property type="evidence" value="ECO:0007669"/>
    <property type="project" value="UniProtKB-UniRule"/>
</dbReference>
<dbReference type="GO" id="GO:0030145">
    <property type="term" value="F:manganese ion binding"/>
    <property type="evidence" value="ECO:0007669"/>
    <property type="project" value="UniProtKB-UniRule"/>
</dbReference>
<dbReference type="GO" id="GO:0019571">
    <property type="term" value="P:D-arabinose catabolic process"/>
    <property type="evidence" value="ECO:0007669"/>
    <property type="project" value="TreeGrafter"/>
</dbReference>
<dbReference type="GO" id="GO:0042355">
    <property type="term" value="P:L-fucose catabolic process"/>
    <property type="evidence" value="ECO:0007669"/>
    <property type="project" value="UniProtKB-UniRule"/>
</dbReference>
<dbReference type="CDD" id="cd03556">
    <property type="entry name" value="L-fucose_isomerase"/>
    <property type="match status" value="1"/>
</dbReference>
<dbReference type="FunFam" id="3.20.14.10:FF:000001">
    <property type="entry name" value="L-fucose isomerase"/>
    <property type="match status" value="1"/>
</dbReference>
<dbReference type="FunFam" id="3.40.50.1070:FF:000001">
    <property type="entry name" value="L-fucose isomerase"/>
    <property type="match status" value="1"/>
</dbReference>
<dbReference type="Gene3D" id="3.40.50.1070">
    <property type="match status" value="1"/>
</dbReference>
<dbReference type="Gene3D" id="3.40.275.10">
    <property type="entry name" value="L-fucose Isomerase, Chain A, domain 2"/>
    <property type="match status" value="1"/>
</dbReference>
<dbReference type="Gene3D" id="3.20.14.10">
    <property type="entry name" value="L-fucose/L-arabinose isomerase, C-terminal"/>
    <property type="match status" value="1"/>
</dbReference>
<dbReference type="HAMAP" id="MF_01254">
    <property type="entry name" value="Fucose_iso"/>
    <property type="match status" value="1"/>
</dbReference>
<dbReference type="InterPro" id="IPR004216">
    <property type="entry name" value="Fuc/Ara_isomerase_C"/>
</dbReference>
<dbReference type="InterPro" id="IPR038393">
    <property type="entry name" value="Fuc_iso_dom3_sf"/>
</dbReference>
<dbReference type="InterPro" id="IPR015888">
    <property type="entry name" value="Fuc_isomerase_C"/>
</dbReference>
<dbReference type="InterPro" id="IPR038391">
    <property type="entry name" value="Fucose_iso_dom1_sf"/>
</dbReference>
<dbReference type="InterPro" id="IPR012888">
    <property type="entry name" value="Fucose_iso_N1"/>
</dbReference>
<dbReference type="InterPro" id="IPR005763">
    <property type="entry name" value="Fucose_isomerase"/>
</dbReference>
<dbReference type="InterPro" id="IPR038392">
    <property type="entry name" value="Fucose_isomerase_dom2_sf"/>
</dbReference>
<dbReference type="InterPro" id="IPR009015">
    <property type="entry name" value="Fucose_isomerase_N/cen_sf"/>
</dbReference>
<dbReference type="InterPro" id="IPR012889">
    <property type="entry name" value="Fucose_isomerase_N2"/>
</dbReference>
<dbReference type="NCBIfam" id="TIGR01089">
    <property type="entry name" value="fucI"/>
    <property type="match status" value="1"/>
</dbReference>
<dbReference type="NCBIfam" id="NF008220">
    <property type="entry name" value="PRK10991.1"/>
    <property type="match status" value="1"/>
</dbReference>
<dbReference type="PANTHER" id="PTHR37840">
    <property type="entry name" value="L-FUCOSE ISOMERASE"/>
    <property type="match status" value="1"/>
</dbReference>
<dbReference type="PANTHER" id="PTHR37840:SF1">
    <property type="entry name" value="L-FUCOSE ISOMERASE"/>
    <property type="match status" value="1"/>
</dbReference>
<dbReference type="Pfam" id="PF02952">
    <property type="entry name" value="Fucose_iso_C"/>
    <property type="match status" value="1"/>
</dbReference>
<dbReference type="Pfam" id="PF07881">
    <property type="entry name" value="Fucose_iso_N1"/>
    <property type="match status" value="1"/>
</dbReference>
<dbReference type="Pfam" id="PF07882">
    <property type="entry name" value="Fucose_iso_N2"/>
    <property type="match status" value="1"/>
</dbReference>
<dbReference type="SUPFAM" id="SSF50443">
    <property type="entry name" value="FucI/AraA C-terminal domain-like"/>
    <property type="match status" value="1"/>
</dbReference>
<dbReference type="SUPFAM" id="SSF53743">
    <property type="entry name" value="FucI/AraA N-terminal and middle domains"/>
    <property type="match status" value="1"/>
</dbReference>
<protein>
    <recommendedName>
        <fullName evidence="1">L-fucose isomerase</fullName>
        <ecNumber evidence="1">5.3.1.25</ecNumber>
    </recommendedName>
    <alternativeName>
        <fullName evidence="1">6-deoxy-L-galactose isomerase</fullName>
    </alternativeName>
    <alternativeName>
        <fullName>FucIase</fullName>
    </alternativeName>
</protein>
<name>FUCI_PHOV8</name>
<comment type="function">
    <text evidence="1">Converts the aldose L-fucose into the corresponding ketose L-fuculose.</text>
</comment>
<comment type="catalytic activity">
    <reaction evidence="1">
        <text>L-fucose = L-fuculose</text>
        <dbReference type="Rhea" id="RHEA:17233"/>
        <dbReference type="ChEBI" id="CHEBI:2181"/>
        <dbReference type="ChEBI" id="CHEBI:17617"/>
        <dbReference type="EC" id="5.3.1.25"/>
    </reaction>
</comment>
<comment type="cofactor">
    <cofactor evidence="1">
        <name>Mn(2+)</name>
        <dbReference type="ChEBI" id="CHEBI:29035"/>
    </cofactor>
</comment>
<comment type="pathway">
    <text evidence="1">Carbohydrate degradation; L-fucose degradation; L-lactaldehyde and glycerone phosphate from L-fucose: step 1/3.</text>
</comment>
<comment type="subcellular location">
    <subcellularLocation>
        <location evidence="1">Cytoplasm</location>
    </subcellularLocation>
</comment>
<comment type="similarity">
    <text evidence="1">Belongs to the L-fucose isomerase family.</text>
</comment>
<feature type="chain" id="PRO_1000067214" description="L-fucose isomerase">
    <location>
        <begin position="1"/>
        <end position="591"/>
    </location>
</feature>
<feature type="active site" description="Proton acceptor" evidence="1">
    <location>
        <position position="338"/>
    </location>
</feature>
<feature type="active site" description="Proton acceptor" evidence="1">
    <location>
        <position position="362"/>
    </location>
</feature>
<feature type="binding site" evidence="1">
    <location>
        <position position="338"/>
    </location>
    <ligand>
        <name>Mn(2+)</name>
        <dbReference type="ChEBI" id="CHEBI:29035"/>
    </ligand>
</feature>
<feature type="binding site" evidence="1">
    <location>
        <position position="362"/>
    </location>
    <ligand>
        <name>Mn(2+)</name>
        <dbReference type="ChEBI" id="CHEBI:29035"/>
    </ligand>
</feature>
<feature type="binding site" evidence="1">
    <location>
        <position position="529"/>
    </location>
    <ligand>
        <name>Mn(2+)</name>
        <dbReference type="ChEBI" id="CHEBI:29035"/>
    </ligand>
</feature>
<sequence>MKKYPKIGIRPTIDGRQGGVRESLEDKTMNLAKAVAELISSNLKNGDGSPVECVIADSTIGRVAESAACAEKFEREGVGATITVTSCWCYGSETMDMHPHWPKAVWGFNGTERPGAVYLAAVLAGHAQKGLPAFGIYGHDVQDLDDNTIPADVAEKLLRFARAAMAVANMRGKSYLSFGSVCMGIAGSIVDPDFFQEYLGIRNESVDETEILRRMEEGIYDHEEYAKAMAWTEKYCKPNEGEDFKNRPEKRKTREEKDADWEFIVKMTIIMRDLMVGNPKLLEMGFKEEAIGHNAIAAGFQGQRQWTDWKPNGDFSEALLNTTFDWNGIREAYVLATENDACNGVAMLFGHLLSGCGQMFSDIRTYWSPEAVKRVTGKELTGMAKNGIIHLINSGATTLDATGESHNEAGEPCMKPNWEMTEADVEACLKATTWYPADRDYFRGGGFSSNFLSKGGMPVTMMRLNLVKGLGPVLQLAEGWTVDIDPEIHQVLNMRTDPTWPTTWFVPRLCDKPAFRDVYSVMNNWGANHGAISYGHIGQDLITLASMLRIPVCMHNVEDDKIFRPASWNAFGMDKEGSDYRACSTYGPIYK</sequence>